<keyword id="KW-0479">Metal-binding</keyword>
<keyword id="KW-0521">NADP</keyword>
<keyword id="KW-0560">Oxidoreductase</keyword>
<keyword id="KW-0630">Potassium</keyword>
<comment type="function">
    <text evidence="1">Catalyzes the irreversible NADPH-dependent deamination of GMP to IMP. It functions in the conversion of nucleobase, nucleoside and nucleotide derivatives of G to A nucleotides, and in maintaining the intracellular balance of A and G nucleotides.</text>
</comment>
<comment type="catalytic activity">
    <reaction evidence="1">
        <text>IMP + NH4(+) + NADP(+) = GMP + NADPH + 2 H(+)</text>
        <dbReference type="Rhea" id="RHEA:17185"/>
        <dbReference type="ChEBI" id="CHEBI:15378"/>
        <dbReference type="ChEBI" id="CHEBI:28938"/>
        <dbReference type="ChEBI" id="CHEBI:57783"/>
        <dbReference type="ChEBI" id="CHEBI:58053"/>
        <dbReference type="ChEBI" id="CHEBI:58115"/>
        <dbReference type="ChEBI" id="CHEBI:58349"/>
        <dbReference type="EC" id="1.7.1.7"/>
    </reaction>
</comment>
<comment type="subunit">
    <text evidence="1">Homotetramer.</text>
</comment>
<comment type="similarity">
    <text evidence="1">Belongs to the IMPDH/GMPR family. GuaC type 1 subfamily.</text>
</comment>
<sequence>MRIEEDLKLGFKDVLIRPKRSTLKSRSDVELERQFTFKHSGQSWSGVPIIAANMDTVGTFSMASALASFDILTAVHKHYSVEEWQAFINNSSADVLKHVMVSTGTSDADFEKTKQILDLNSALNFVCIDVANGYSEHFVQFVAKAREAWPTKTICAGNVVTGEMCEELILSGADIVKVGIGPGSVCTTRVKTGVGYPQLSAVIECADAAHGLGGMIVSDGGCTTPGDVAKAFGGGADFVMLGGMLAGHEESGGRIVEENGEKFMLFYGMSSESAMKRHVGGVAEYRAAEGKTVKLPLRGPVENTARDILGGLRSACTYVGASRLKELTKRTTFIRVQEQENRIFNNL</sequence>
<organism>
    <name type="scientific">Escherichia coli O81 (strain ED1a)</name>
    <dbReference type="NCBI Taxonomy" id="585397"/>
    <lineage>
        <taxon>Bacteria</taxon>
        <taxon>Pseudomonadati</taxon>
        <taxon>Pseudomonadota</taxon>
        <taxon>Gammaproteobacteria</taxon>
        <taxon>Enterobacterales</taxon>
        <taxon>Enterobacteriaceae</taxon>
        <taxon>Escherichia</taxon>
    </lineage>
</organism>
<feature type="chain" id="PRO_1000146987" description="GMP reductase">
    <location>
        <begin position="1"/>
        <end position="347"/>
    </location>
</feature>
<feature type="active site" description="Thioimidate intermediate" evidence="1">
    <location>
        <position position="186"/>
    </location>
</feature>
<feature type="binding site" evidence="1">
    <location>
        <begin position="108"/>
        <end position="131"/>
    </location>
    <ligand>
        <name>NADP(+)</name>
        <dbReference type="ChEBI" id="CHEBI:58349"/>
    </ligand>
</feature>
<feature type="binding site" evidence="1">
    <location>
        <position position="181"/>
    </location>
    <ligand>
        <name>K(+)</name>
        <dbReference type="ChEBI" id="CHEBI:29103"/>
    </ligand>
</feature>
<feature type="binding site" evidence="1">
    <location>
        <position position="183"/>
    </location>
    <ligand>
        <name>K(+)</name>
        <dbReference type="ChEBI" id="CHEBI:29103"/>
    </ligand>
</feature>
<feature type="binding site" evidence="1">
    <location>
        <begin position="216"/>
        <end position="239"/>
    </location>
    <ligand>
        <name>NADP(+)</name>
        <dbReference type="ChEBI" id="CHEBI:58349"/>
    </ligand>
</feature>
<evidence type="ECO:0000255" key="1">
    <source>
        <dbReference type="HAMAP-Rule" id="MF_00596"/>
    </source>
</evidence>
<name>GUAC_ECO81</name>
<gene>
    <name evidence="1" type="primary">guaC</name>
    <name type="ordered locus">ECED1_0103</name>
</gene>
<dbReference type="EC" id="1.7.1.7" evidence="1"/>
<dbReference type="EMBL" id="CU928162">
    <property type="protein sequence ID" value="CAR06326.1"/>
    <property type="molecule type" value="Genomic_DNA"/>
</dbReference>
<dbReference type="RefSeq" id="WP_001217348.1">
    <property type="nucleotide sequence ID" value="NC_011745.1"/>
</dbReference>
<dbReference type="SMR" id="B7MNW1"/>
<dbReference type="KEGG" id="ecq:ECED1_0103"/>
<dbReference type="HOGENOM" id="CLU_022552_5_3_6"/>
<dbReference type="Proteomes" id="UP000000748">
    <property type="component" value="Chromosome"/>
</dbReference>
<dbReference type="GO" id="GO:0005829">
    <property type="term" value="C:cytosol"/>
    <property type="evidence" value="ECO:0007669"/>
    <property type="project" value="TreeGrafter"/>
</dbReference>
<dbReference type="GO" id="GO:1902560">
    <property type="term" value="C:GMP reductase complex"/>
    <property type="evidence" value="ECO:0007669"/>
    <property type="project" value="InterPro"/>
</dbReference>
<dbReference type="GO" id="GO:0003920">
    <property type="term" value="F:GMP reductase activity"/>
    <property type="evidence" value="ECO:0007669"/>
    <property type="project" value="UniProtKB-UniRule"/>
</dbReference>
<dbReference type="GO" id="GO:0046872">
    <property type="term" value="F:metal ion binding"/>
    <property type="evidence" value="ECO:0007669"/>
    <property type="project" value="UniProtKB-KW"/>
</dbReference>
<dbReference type="GO" id="GO:0006163">
    <property type="term" value="P:purine nucleotide metabolic process"/>
    <property type="evidence" value="ECO:0007669"/>
    <property type="project" value="UniProtKB-UniRule"/>
</dbReference>
<dbReference type="CDD" id="cd00381">
    <property type="entry name" value="IMPDH"/>
    <property type="match status" value="1"/>
</dbReference>
<dbReference type="FunFam" id="3.20.20.70:FF:000012">
    <property type="entry name" value="GMP reductase"/>
    <property type="match status" value="1"/>
</dbReference>
<dbReference type="Gene3D" id="3.20.20.70">
    <property type="entry name" value="Aldolase class I"/>
    <property type="match status" value="1"/>
</dbReference>
<dbReference type="HAMAP" id="MF_00596">
    <property type="entry name" value="GMP_reduct_type1"/>
    <property type="match status" value="1"/>
</dbReference>
<dbReference type="InterPro" id="IPR013785">
    <property type="entry name" value="Aldolase_TIM"/>
</dbReference>
<dbReference type="InterPro" id="IPR050139">
    <property type="entry name" value="GMP_reductase"/>
</dbReference>
<dbReference type="InterPro" id="IPR005993">
    <property type="entry name" value="GMPR"/>
</dbReference>
<dbReference type="InterPro" id="IPR015875">
    <property type="entry name" value="IMP_DH/GMP_Rdtase_CS"/>
</dbReference>
<dbReference type="InterPro" id="IPR001093">
    <property type="entry name" value="IMP_DH_GMPRt"/>
</dbReference>
<dbReference type="NCBIfam" id="TIGR01305">
    <property type="entry name" value="GMP_reduct_1"/>
    <property type="match status" value="1"/>
</dbReference>
<dbReference type="NCBIfam" id="NF003470">
    <property type="entry name" value="PRK05096.1"/>
    <property type="match status" value="1"/>
</dbReference>
<dbReference type="PANTHER" id="PTHR43170">
    <property type="entry name" value="GMP REDUCTASE"/>
    <property type="match status" value="1"/>
</dbReference>
<dbReference type="PANTHER" id="PTHR43170:SF5">
    <property type="entry name" value="GMP REDUCTASE"/>
    <property type="match status" value="1"/>
</dbReference>
<dbReference type="Pfam" id="PF00478">
    <property type="entry name" value="IMPDH"/>
    <property type="match status" value="1"/>
</dbReference>
<dbReference type="PIRSF" id="PIRSF000235">
    <property type="entry name" value="GMP_reductase"/>
    <property type="match status" value="1"/>
</dbReference>
<dbReference type="SMART" id="SM01240">
    <property type="entry name" value="IMPDH"/>
    <property type="match status" value="1"/>
</dbReference>
<dbReference type="SUPFAM" id="SSF51412">
    <property type="entry name" value="Inosine monophosphate dehydrogenase (IMPDH)"/>
    <property type="match status" value="1"/>
</dbReference>
<dbReference type="PROSITE" id="PS00487">
    <property type="entry name" value="IMP_DH_GMP_RED"/>
    <property type="match status" value="1"/>
</dbReference>
<proteinExistence type="inferred from homology"/>
<accession>B7MNW1</accession>
<reference key="1">
    <citation type="journal article" date="2009" name="PLoS Genet.">
        <title>Organised genome dynamics in the Escherichia coli species results in highly diverse adaptive paths.</title>
        <authorList>
            <person name="Touchon M."/>
            <person name="Hoede C."/>
            <person name="Tenaillon O."/>
            <person name="Barbe V."/>
            <person name="Baeriswyl S."/>
            <person name="Bidet P."/>
            <person name="Bingen E."/>
            <person name="Bonacorsi S."/>
            <person name="Bouchier C."/>
            <person name="Bouvet O."/>
            <person name="Calteau A."/>
            <person name="Chiapello H."/>
            <person name="Clermont O."/>
            <person name="Cruveiller S."/>
            <person name="Danchin A."/>
            <person name="Diard M."/>
            <person name="Dossat C."/>
            <person name="Karoui M.E."/>
            <person name="Frapy E."/>
            <person name="Garry L."/>
            <person name="Ghigo J.M."/>
            <person name="Gilles A.M."/>
            <person name="Johnson J."/>
            <person name="Le Bouguenec C."/>
            <person name="Lescat M."/>
            <person name="Mangenot S."/>
            <person name="Martinez-Jehanne V."/>
            <person name="Matic I."/>
            <person name="Nassif X."/>
            <person name="Oztas S."/>
            <person name="Petit M.A."/>
            <person name="Pichon C."/>
            <person name="Rouy Z."/>
            <person name="Ruf C.S."/>
            <person name="Schneider D."/>
            <person name="Tourret J."/>
            <person name="Vacherie B."/>
            <person name="Vallenet D."/>
            <person name="Medigue C."/>
            <person name="Rocha E.P.C."/>
            <person name="Denamur E."/>
        </authorList>
    </citation>
    <scope>NUCLEOTIDE SEQUENCE [LARGE SCALE GENOMIC DNA]</scope>
    <source>
        <strain>ED1a</strain>
    </source>
</reference>
<protein>
    <recommendedName>
        <fullName evidence="1">GMP reductase</fullName>
        <ecNumber evidence="1">1.7.1.7</ecNumber>
    </recommendedName>
    <alternativeName>
        <fullName evidence="1">Guanosine 5'-monophosphate oxidoreductase</fullName>
        <shortName evidence="1">Guanosine monophosphate reductase</shortName>
    </alternativeName>
</protein>